<sequence length="503" mass="54779">MAIQIPSRLLFIDGEWREPVLKKRIPIINPATEEIIGHIPAATAEDVELAVEAARRALSRNKGRDWASAPGAVRAKYLRAIAAKIGERKPEIAKLEAIDCGKPLDEAAWDIDDVSGCFEYYAELAEGLDAQQKAPISLPMEQFKSHVLKEPIGVVGLITPWNYPLLMATWKVAPALAAGCAAILKPSELASVTCLELADVCREVGLPPGVLNILTGLGHEAGAPLVSHPHVDKIAFTGSTMTGSKIMTAAAQLVKPVSLELGGKSPIVVFDDVDIDKAAEWTAFGCFWTNGQICSATSRLILHENIATEFLDRLLKWCKNIKIADPLEEGCRLGPVVSGGQYEKILKSIETAKSEGARVLSGGDRPEHLKKGFFIEPTIITDVTTSMQIWREEVFGPVLCVKTFSSEDEALELANDTHYGLGAAVISKDLERCDRFSKGLQAGIVWINCSQPCFCQAPWGGNKRSGFGRELGKWGLDNYLTVKQVTEYVSDDPWGWYTSPSKL</sequence>
<keyword id="KW-0963">Cytoplasm</keyword>
<keyword id="KW-0479">Metal-binding</keyword>
<keyword id="KW-0520">NAD</keyword>
<keyword id="KW-0560">Oxidoreductase</keyword>
<keyword id="KW-0915">Sodium</keyword>
<protein>
    <recommendedName>
        <fullName evidence="6">Aminoaldehyde dehydrogenase 1, peroxisomal</fullName>
        <shortName evidence="6">MdAMADH1</shortName>
        <ecNumber evidence="5">1.2.1.-</ecNumber>
    </recommendedName>
    <alternativeName>
        <fullName evidence="7">Aminobutyraldehyde dehydrogenase AMADH1</fullName>
        <ecNumber evidence="5">1.2.1.19</ecNumber>
    </alternativeName>
</protein>
<accession>A0A0E3T552</accession>
<feature type="chain" id="PRO_0000454131" description="Aminoaldehyde dehydrogenase 1, peroxisomal">
    <location>
        <begin position="1"/>
        <end position="503"/>
    </location>
</feature>
<feature type="active site" description="Proton acceptor" evidence="3">
    <location>
        <position position="260"/>
    </location>
</feature>
<feature type="active site" description="Nucleophile" evidence="4">
    <location>
        <position position="294"/>
    </location>
</feature>
<feature type="binding site" evidence="2">
    <location>
        <position position="28"/>
    </location>
    <ligand>
        <name>Na(+)</name>
        <dbReference type="ChEBI" id="CHEBI:29101"/>
    </ligand>
</feature>
<feature type="binding site" evidence="2">
    <location>
        <position position="99"/>
    </location>
    <ligand>
        <name>Na(+)</name>
        <dbReference type="ChEBI" id="CHEBI:29101"/>
    </ligand>
</feature>
<feature type="binding site" evidence="2">
    <location>
        <position position="189"/>
    </location>
    <ligand>
        <name>Na(+)</name>
        <dbReference type="ChEBI" id="CHEBI:29101"/>
    </ligand>
</feature>
<feature type="binding site" evidence="2">
    <location>
        <begin position="238"/>
        <end position="245"/>
    </location>
    <ligand>
        <name>NAD(+)</name>
        <dbReference type="ChEBI" id="CHEBI:57540"/>
    </ligand>
</feature>
<feature type="binding site" evidence="2">
    <location>
        <position position="294"/>
    </location>
    <ligand>
        <name>NAD(+)</name>
        <dbReference type="ChEBI" id="CHEBI:57540"/>
    </ligand>
</feature>
<feature type="binding site" evidence="2">
    <location>
        <position position="393"/>
    </location>
    <ligand>
        <name>NAD(+)</name>
        <dbReference type="ChEBI" id="CHEBI:57540"/>
    </ligand>
</feature>
<feature type="site" description="Transition state stabilizer" evidence="1">
    <location>
        <position position="162"/>
    </location>
</feature>
<gene>
    <name evidence="6" type="primary">AMADH1</name>
</gene>
<dbReference type="EC" id="1.2.1.-" evidence="5"/>
<dbReference type="EC" id="1.2.1.19" evidence="5"/>
<dbReference type="EMBL" id="KP218040">
    <property type="protein sequence ID" value="AKC00599.1"/>
    <property type="molecule type" value="mRNA"/>
</dbReference>
<dbReference type="RefSeq" id="NP_001315693.1">
    <property type="nucleotide sequence ID" value="NM_001328764.1"/>
</dbReference>
<dbReference type="SMR" id="A0A0E3T552"/>
<dbReference type="GeneID" id="103409732"/>
<dbReference type="KEGG" id="mdm:103409732"/>
<dbReference type="OrthoDB" id="310895at2759"/>
<dbReference type="BRENDA" id="1.2.1.19">
    <property type="organism ID" value="3164"/>
</dbReference>
<dbReference type="UniPathway" id="UPA00529">
    <property type="reaction ID" value="UER00386"/>
</dbReference>
<dbReference type="GO" id="GO:0005829">
    <property type="term" value="C:cytosol"/>
    <property type="evidence" value="ECO:0000314"/>
    <property type="project" value="UniProtKB"/>
</dbReference>
<dbReference type="GO" id="GO:0102244">
    <property type="term" value="F:3-aminopropanal dehydrogenase (NAD+) activity"/>
    <property type="evidence" value="ECO:0007669"/>
    <property type="project" value="RHEA"/>
</dbReference>
<dbReference type="GO" id="GO:0019145">
    <property type="term" value="F:aminobutyraldehyde dehydrogenase (NAD+) activity"/>
    <property type="evidence" value="ECO:0000314"/>
    <property type="project" value="UniProtKB"/>
</dbReference>
<dbReference type="GO" id="GO:0046872">
    <property type="term" value="F:metal ion binding"/>
    <property type="evidence" value="ECO:0007669"/>
    <property type="project" value="UniProtKB-KW"/>
</dbReference>
<dbReference type="GO" id="GO:0110095">
    <property type="term" value="P:cellular detoxification of aldehyde"/>
    <property type="evidence" value="ECO:0000314"/>
    <property type="project" value="UniProtKB"/>
</dbReference>
<dbReference type="GO" id="GO:0019285">
    <property type="term" value="P:glycine betaine biosynthetic process from choline"/>
    <property type="evidence" value="ECO:0007669"/>
    <property type="project" value="UniProtKB-UniPathway"/>
</dbReference>
<dbReference type="CDD" id="cd07110">
    <property type="entry name" value="ALDH_F10_BADH"/>
    <property type="match status" value="1"/>
</dbReference>
<dbReference type="FunFam" id="3.40.309.10:FF:000012">
    <property type="entry name" value="Betaine aldehyde dehydrogenase"/>
    <property type="match status" value="1"/>
</dbReference>
<dbReference type="FunFam" id="3.40.605.10:FF:000007">
    <property type="entry name" value="NAD/NADP-dependent betaine aldehyde dehydrogenase"/>
    <property type="match status" value="1"/>
</dbReference>
<dbReference type="Gene3D" id="3.40.605.10">
    <property type="entry name" value="Aldehyde Dehydrogenase, Chain A, domain 1"/>
    <property type="match status" value="1"/>
</dbReference>
<dbReference type="Gene3D" id="3.40.309.10">
    <property type="entry name" value="Aldehyde Dehydrogenase, Chain A, domain 2"/>
    <property type="match status" value="1"/>
</dbReference>
<dbReference type="InterPro" id="IPR016161">
    <property type="entry name" value="Ald_DH/histidinol_DH"/>
</dbReference>
<dbReference type="InterPro" id="IPR016163">
    <property type="entry name" value="Ald_DH_C"/>
</dbReference>
<dbReference type="InterPro" id="IPR016160">
    <property type="entry name" value="Ald_DH_CS_CYS"/>
</dbReference>
<dbReference type="InterPro" id="IPR029510">
    <property type="entry name" value="Ald_DH_CS_GLU"/>
</dbReference>
<dbReference type="InterPro" id="IPR016162">
    <property type="entry name" value="Ald_DH_N"/>
</dbReference>
<dbReference type="InterPro" id="IPR015590">
    <property type="entry name" value="Aldehyde_DH_dom"/>
</dbReference>
<dbReference type="PANTHER" id="PTHR43860">
    <property type="entry name" value="BETAINE ALDEHYDE DEHYDROGENASE"/>
    <property type="match status" value="1"/>
</dbReference>
<dbReference type="PANTHER" id="PTHR43860:SF2">
    <property type="entry name" value="BETAINE ALDEHYDE DEHYDROGENASE-RELATED"/>
    <property type="match status" value="1"/>
</dbReference>
<dbReference type="Pfam" id="PF00171">
    <property type="entry name" value="Aldedh"/>
    <property type="match status" value="1"/>
</dbReference>
<dbReference type="SUPFAM" id="SSF53720">
    <property type="entry name" value="ALDH-like"/>
    <property type="match status" value="1"/>
</dbReference>
<dbReference type="PROSITE" id="PS00070">
    <property type="entry name" value="ALDEHYDE_DEHYDR_CYS"/>
    <property type="match status" value="1"/>
</dbReference>
<dbReference type="PROSITE" id="PS00687">
    <property type="entry name" value="ALDEHYDE_DEHYDR_GLU"/>
    <property type="match status" value="1"/>
</dbReference>
<name>AADH1_MALDO</name>
<organism>
    <name type="scientific">Malus domestica</name>
    <name type="common">Apple</name>
    <name type="synonym">Pyrus malus</name>
    <dbReference type="NCBI Taxonomy" id="3750"/>
    <lineage>
        <taxon>Eukaryota</taxon>
        <taxon>Viridiplantae</taxon>
        <taxon>Streptophyta</taxon>
        <taxon>Embryophyta</taxon>
        <taxon>Tracheophyta</taxon>
        <taxon>Spermatophyta</taxon>
        <taxon>Magnoliopsida</taxon>
        <taxon>eudicotyledons</taxon>
        <taxon>Gunneridae</taxon>
        <taxon>Pentapetalae</taxon>
        <taxon>rosids</taxon>
        <taxon>fabids</taxon>
        <taxon>Rosales</taxon>
        <taxon>Rosaceae</taxon>
        <taxon>Amygdaloideae</taxon>
        <taxon>Maleae</taxon>
        <taxon>Malus</taxon>
    </lineage>
</organism>
<reference key="1">
    <citation type="journal article" date="2015" name="FEBS Lett.">
        <title>NAD(+)-aminoaldehyde dehydrogenase candidates for 4-aminobutyrate (GABA) and beta-alanine production during terminal oxidation of polyamines in apple fruit.</title>
        <authorList>
            <person name="Zarei A."/>
            <person name="Trobacher C.P."/>
            <person name="Shelp B.J."/>
        </authorList>
    </citation>
    <scope>NUCLEOTIDE SEQUENCE [MRNA]</scope>
    <scope>FUNCTION</scope>
    <scope>CATALYTIC ACTIVITY</scope>
    <scope>BIOPHYSICOCHEMICAL PROPERTIES</scope>
    <scope>SUBCELLULAR LOCATION</scope>
    <scope>TISSUE SPECIFICITY</scope>
</reference>
<proteinExistence type="evidence at protein level"/>
<evidence type="ECO:0000250" key="1">
    <source>
        <dbReference type="UniProtKB" id="P20000"/>
    </source>
</evidence>
<evidence type="ECO:0000250" key="2">
    <source>
        <dbReference type="UniProtKB" id="Q8VWZ1"/>
    </source>
</evidence>
<evidence type="ECO:0000255" key="3">
    <source>
        <dbReference type="PROSITE-ProRule" id="PRU10007"/>
    </source>
</evidence>
<evidence type="ECO:0000255" key="4">
    <source>
        <dbReference type="PROSITE-ProRule" id="PRU10008"/>
    </source>
</evidence>
<evidence type="ECO:0000269" key="5">
    <source>
    </source>
</evidence>
<evidence type="ECO:0000303" key="6">
    <source>
    </source>
</evidence>
<evidence type="ECO:0000305" key="7"/>
<comment type="function">
    <text evidence="5 7">Dehydrogenase that catalyzes the oxidation of several aminoaldehydes (PubMed:26296314). Metabolizes and detoxifies aldehyde products of polyamine degradation to non-toxic amino acids (Probable). Catalyzes the oxidation of 4-aminobutanal and 3-aminopropanal to 4-aminobutanoate and beta-alanine, respectively (PubMed:26296314).</text>
</comment>
<comment type="catalytic activity">
    <reaction evidence="5">
        <text>4-aminobutanal + NAD(+) + H2O = 4-aminobutanoate + NADH + 2 H(+)</text>
        <dbReference type="Rhea" id="RHEA:19105"/>
        <dbReference type="ChEBI" id="CHEBI:15377"/>
        <dbReference type="ChEBI" id="CHEBI:15378"/>
        <dbReference type="ChEBI" id="CHEBI:57540"/>
        <dbReference type="ChEBI" id="CHEBI:57945"/>
        <dbReference type="ChEBI" id="CHEBI:58264"/>
        <dbReference type="ChEBI" id="CHEBI:59888"/>
        <dbReference type="EC" id="1.2.1.19"/>
    </reaction>
    <physiologicalReaction direction="left-to-right" evidence="5">
        <dbReference type="Rhea" id="RHEA:19106"/>
    </physiologicalReaction>
</comment>
<comment type="catalytic activity">
    <reaction evidence="5">
        <text>3-aminopropanal + NAD(+) + H2O = beta-alanine + NADH + 2 H(+)</text>
        <dbReference type="Rhea" id="RHEA:30695"/>
        <dbReference type="ChEBI" id="CHEBI:15377"/>
        <dbReference type="ChEBI" id="CHEBI:15378"/>
        <dbReference type="ChEBI" id="CHEBI:57540"/>
        <dbReference type="ChEBI" id="CHEBI:57945"/>
        <dbReference type="ChEBI" id="CHEBI:57966"/>
        <dbReference type="ChEBI" id="CHEBI:58374"/>
    </reaction>
    <physiologicalReaction direction="left-to-right" evidence="5">
        <dbReference type="Rhea" id="RHEA:30696"/>
    </physiologicalReaction>
</comment>
<comment type="biophysicochemical properties">
    <kinetics>
        <KM evidence="5">84.8 uM for 4-aminobutanal</KM>
        <KM evidence="5">16 uM for 3-aminopropanal</KM>
        <KM evidence="5">33.8 uM for NAD(+) with 3-aminopropanal as substrate</KM>
        <Vmax evidence="5">1.2 umol/min/mg enzyme with 4-aminobutanal as substrate</Vmax>
        <Vmax evidence="5">11.3 umol/min/mg enzyme with 3-aminopropanal as substrate</Vmax>
        <Vmax evidence="5">5.4 umol/min/mg enzyme toward NAD(+) in presence of 3-aminopropanal</Vmax>
    </kinetics>
    <phDependence>
        <text evidence="5">Optimum pH is 9.75 with 4-aminobutanal as substrate.</text>
    </phDependence>
</comment>
<comment type="pathway">
    <text evidence="7">Amine and polyamine biosynthesis; betaine biosynthesis via choline pathway; betaine from betaine aldehyde: step 1/1.</text>
</comment>
<comment type="subcellular location">
    <subcellularLocation>
        <location evidence="5">Cytoplasm</location>
        <location evidence="5">Cytosol</location>
    </subcellularLocation>
</comment>
<comment type="tissue specificity">
    <text evidence="5">Expressed in leaves, flowers and fruits.</text>
</comment>
<comment type="similarity">
    <text evidence="7">Belongs to the aldehyde dehydrogenase family.</text>
</comment>